<protein>
    <recommendedName>
        <fullName evidence="3">Probable 2-methylisocitrate lyase 1</fullName>
        <shortName evidence="1">2-MIC</shortName>
        <shortName evidence="1">MICL</shortName>
        <ecNumber evidence="1">4.1.3.30</ecNumber>
    </recommendedName>
    <alternativeName>
        <fullName evidence="1">(2R,3S)-2-methylisocitrate lyase</fullName>
    </alternativeName>
</protein>
<proteinExistence type="inferred from homology"/>
<dbReference type="EC" id="4.1.3.30" evidence="1"/>
<dbReference type="EMBL" id="AF434798">
    <property type="protein sequence ID" value="AAM21501.1"/>
    <property type="molecule type" value="Genomic_DNA"/>
</dbReference>
<dbReference type="EMBL" id="BA000036">
    <property type="protein sequence ID" value="BAB98088.1"/>
    <property type="status" value="ALT_INIT"/>
    <property type="molecule type" value="Genomic_DNA"/>
</dbReference>
<dbReference type="EMBL" id="BX927150">
    <property type="protein sequence ID" value="CAF19400.1"/>
    <property type="molecule type" value="Genomic_DNA"/>
</dbReference>
<dbReference type="RefSeq" id="NP_599927.1">
    <property type="nucleotide sequence ID" value="NC_003450.3"/>
</dbReference>
<dbReference type="SMR" id="Q8NSH8"/>
<dbReference type="STRING" id="196627.cg0797"/>
<dbReference type="KEGG" id="cgb:cg0797"/>
<dbReference type="KEGG" id="cgl:Cgl0695"/>
<dbReference type="PATRIC" id="fig|196627.13.peg.681"/>
<dbReference type="eggNOG" id="COG2513">
    <property type="taxonomic scope" value="Bacteria"/>
</dbReference>
<dbReference type="HOGENOM" id="CLU_027389_3_2_11"/>
<dbReference type="OrthoDB" id="9771433at2"/>
<dbReference type="BioCyc" id="CORYNE:G18NG-10257-MONOMER"/>
<dbReference type="Proteomes" id="UP000000582">
    <property type="component" value="Chromosome"/>
</dbReference>
<dbReference type="Proteomes" id="UP000001009">
    <property type="component" value="Chromosome"/>
</dbReference>
<dbReference type="GO" id="GO:0000287">
    <property type="term" value="F:magnesium ion binding"/>
    <property type="evidence" value="ECO:0007669"/>
    <property type="project" value="UniProtKB-UniRule"/>
</dbReference>
<dbReference type="GO" id="GO:0046421">
    <property type="term" value="F:methylisocitrate lyase activity"/>
    <property type="evidence" value="ECO:0007669"/>
    <property type="project" value="UniProtKB-UniRule"/>
</dbReference>
<dbReference type="GO" id="GO:0019629">
    <property type="term" value="P:propionate catabolic process, 2-methylcitrate cycle"/>
    <property type="evidence" value="ECO:0007669"/>
    <property type="project" value="UniProtKB-UniRule"/>
</dbReference>
<dbReference type="CDD" id="cd00377">
    <property type="entry name" value="ICL_PEPM"/>
    <property type="match status" value="1"/>
</dbReference>
<dbReference type="Gene3D" id="3.20.20.60">
    <property type="entry name" value="Phosphoenolpyruvate-binding domains"/>
    <property type="match status" value="1"/>
</dbReference>
<dbReference type="HAMAP" id="MF_01939">
    <property type="entry name" value="PrpB"/>
    <property type="match status" value="1"/>
</dbReference>
<dbReference type="InterPro" id="IPR039556">
    <property type="entry name" value="ICL/PEPM"/>
</dbReference>
<dbReference type="InterPro" id="IPR018523">
    <property type="entry name" value="Isocitrate_lyase_ph_CS"/>
</dbReference>
<dbReference type="InterPro" id="IPR012695">
    <property type="entry name" value="PrpB"/>
</dbReference>
<dbReference type="InterPro" id="IPR015813">
    <property type="entry name" value="Pyrv/PenolPyrv_kinase-like_dom"/>
</dbReference>
<dbReference type="InterPro" id="IPR040442">
    <property type="entry name" value="Pyrv_kinase-like_dom_sf"/>
</dbReference>
<dbReference type="NCBIfam" id="TIGR02317">
    <property type="entry name" value="prpB"/>
    <property type="match status" value="1"/>
</dbReference>
<dbReference type="PANTHER" id="PTHR42905:SF5">
    <property type="entry name" value="CARBOXYVINYL-CARBOXYPHOSPHONATE PHOSPHORYLMUTASE, CHLOROPLASTIC"/>
    <property type="match status" value="1"/>
</dbReference>
<dbReference type="PANTHER" id="PTHR42905">
    <property type="entry name" value="PHOSPHOENOLPYRUVATE CARBOXYLASE"/>
    <property type="match status" value="1"/>
</dbReference>
<dbReference type="Pfam" id="PF13714">
    <property type="entry name" value="PEP_mutase"/>
    <property type="match status" value="1"/>
</dbReference>
<dbReference type="SUPFAM" id="SSF51621">
    <property type="entry name" value="Phosphoenolpyruvate/pyruvate domain"/>
    <property type="match status" value="1"/>
</dbReference>
<dbReference type="PROSITE" id="PS00161">
    <property type="entry name" value="ISOCITRATE_LYASE"/>
    <property type="match status" value="1"/>
</dbReference>
<accession>Q8NSH8</accession>
<feature type="chain" id="PRO_0000068813" description="Probable 2-methylisocitrate lyase 1">
    <location>
        <begin position="1"/>
        <end position="305"/>
    </location>
</feature>
<feature type="binding site" evidence="1">
    <location>
        <begin position="52"/>
        <end position="54"/>
    </location>
    <ligand>
        <name>substrate</name>
    </ligand>
</feature>
<feature type="binding site" evidence="1">
    <location>
        <position position="91"/>
    </location>
    <ligand>
        <name>Mg(2+)</name>
        <dbReference type="ChEBI" id="CHEBI:18420"/>
    </ligand>
</feature>
<feature type="binding site" evidence="1">
    <location>
        <position position="93"/>
    </location>
    <ligand>
        <name>Mg(2+)</name>
        <dbReference type="ChEBI" id="CHEBI:18420"/>
    </ligand>
</feature>
<feature type="binding site" evidence="1">
    <location>
        <begin position="128"/>
        <end position="129"/>
    </location>
    <ligand>
        <name>substrate</name>
    </ligand>
</feature>
<feature type="binding site" evidence="1">
    <location>
        <position position="163"/>
    </location>
    <ligand>
        <name>substrate</name>
    </ligand>
</feature>
<feature type="binding site" evidence="1">
    <location>
        <position position="193"/>
    </location>
    <ligand>
        <name>substrate</name>
    </ligand>
</feature>
<feature type="binding site" evidence="1">
    <location>
        <begin position="216"/>
        <end position="218"/>
    </location>
    <ligand>
        <name>substrate</name>
    </ligand>
</feature>
<feature type="binding site" evidence="1">
    <location>
        <position position="247"/>
    </location>
    <ligand>
        <name>substrate</name>
    </ligand>
</feature>
<feature type="binding site" evidence="1">
    <location>
        <position position="276"/>
    </location>
    <ligand>
        <name>substrate</name>
    </ligand>
</feature>
<evidence type="ECO:0000255" key="1">
    <source>
        <dbReference type="HAMAP-Rule" id="MF_01939"/>
    </source>
</evidence>
<evidence type="ECO:0000269" key="2">
    <source>
    </source>
</evidence>
<evidence type="ECO:0000303" key="3">
    <source>
    </source>
</evidence>
<evidence type="ECO:0000305" key="4"/>
<reference key="1">
    <citation type="journal article" date="2002" name="J. Bacteriol.">
        <title>Identification of two prpDBC gene clusters in Corynebacterium glutamicum and their involvement in propionate degradation via the 2-methylcitrate cycle.</title>
        <authorList>
            <person name="Claes W.A."/>
            <person name="Puehler A."/>
            <person name="Kalinowski J."/>
        </authorList>
    </citation>
    <scope>NUCLEOTIDE SEQUENCE [GENOMIC DNA]</scope>
    <scope>FUNCTION</scope>
    <source>
        <strain>ATCC 13032 / DSM 20300 / JCM 1318 / BCRC 11384 / CCUG 27702 / LMG 3730 / NBRC 12168 / NCIMB 10025 / NRRL B-2784 / 534</strain>
    </source>
</reference>
<reference key="2">
    <citation type="journal article" date="2003" name="Appl. Microbiol. Biotechnol.">
        <title>The Corynebacterium glutamicum genome: features and impacts on biotechnological processes.</title>
        <authorList>
            <person name="Ikeda M."/>
            <person name="Nakagawa S."/>
        </authorList>
    </citation>
    <scope>NUCLEOTIDE SEQUENCE [LARGE SCALE GENOMIC DNA]</scope>
    <source>
        <strain>ATCC 13032 / DSM 20300 / JCM 1318 / BCRC 11384 / CCUG 27702 / LMG 3730 / NBRC 12168 / NCIMB 10025 / NRRL B-2784 / 534</strain>
    </source>
</reference>
<reference key="3">
    <citation type="journal article" date="2003" name="J. Biotechnol.">
        <title>The complete Corynebacterium glutamicum ATCC 13032 genome sequence and its impact on the production of L-aspartate-derived amino acids and vitamins.</title>
        <authorList>
            <person name="Kalinowski J."/>
            <person name="Bathe B."/>
            <person name="Bartels D."/>
            <person name="Bischoff N."/>
            <person name="Bott M."/>
            <person name="Burkovski A."/>
            <person name="Dusch N."/>
            <person name="Eggeling L."/>
            <person name="Eikmanns B.J."/>
            <person name="Gaigalat L."/>
            <person name="Goesmann A."/>
            <person name="Hartmann M."/>
            <person name="Huthmacher K."/>
            <person name="Kraemer R."/>
            <person name="Linke B."/>
            <person name="McHardy A.C."/>
            <person name="Meyer F."/>
            <person name="Moeckel B."/>
            <person name="Pfefferle W."/>
            <person name="Puehler A."/>
            <person name="Rey D.A."/>
            <person name="Rueckert C."/>
            <person name="Rupp O."/>
            <person name="Sahm H."/>
            <person name="Wendisch V.F."/>
            <person name="Wiegraebe I."/>
            <person name="Tauch A."/>
        </authorList>
    </citation>
    <scope>NUCLEOTIDE SEQUENCE [LARGE SCALE GENOMIC DNA]</scope>
    <source>
        <strain>ATCC 13032 / DSM 20300 / JCM 1318 / BCRC 11384 / CCUG 27702 / LMG 3730 / NBRC 12168 / NCIMB 10025 / NRRL B-2784 / 534</strain>
    </source>
</reference>
<organism>
    <name type="scientific">Corynebacterium glutamicum (strain ATCC 13032 / DSM 20300 / JCM 1318 / BCRC 11384 / CCUG 27702 / LMG 3730 / NBRC 12168 / NCIMB 10025 / NRRL B-2784 / 534)</name>
    <dbReference type="NCBI Taxonomy" id="196627"/>
    <lineage>
        <taxon>Bacteria</taxon>
        <taxon>Bacillati</taxon>
        <taxon>Actinomycetota</taxon>
        <taxon>Actinomycetes</taxon>
        <taxon>Mycobacteriales</taxon>
        <taxon>Corynebacteriaceae</taxon>
        <taxon>Corynebacterium</taxon>
    </lineage>
</organism>
<sequence length="305" mass="33415">MNLFSNGVDVGRRRQAFKAALAAPHIARLPGAFSPLIARSIEEAGFEGVYVSGAVIAADLALPDIGLTTLTEVAHRARQIARVTDLGVLVDADTGFGEPMSAARTVAELEDAGVAGCHLEDQVNPKRCGHLDGKEVVRTDVMVRRIAAAVSARRDPNFVICARTDAAGVEGIDAAIERAKAYLDAGADMIFTEALHSEADFRYFRHAIPDALLLANMTEFGKTTLLSADVLEEIGYNAVIYPVTTLRIAMGQVEQALAEIKEHGTQEGWLDRMQHRSRLYELLRYEDYNVFDQHIFTYRKGENNE</sequence>
<keyword id="KW-0456">Lyase</keyword>
<keyword id="KW-0460">Magnesium</keyword>
<keyword id="KW-0479">Metal-binding</keyword>
<keyword id="KW-1185">Reference proteome</keyword>
<comment type="function">
    <text evidence="2">Catalyzes the thermodynamically favored C-C bond cleavage of (2R,3S)-2-methylisocitrate to yield pyruvate and succinate via an alpha-carboxy-carbanion intermediate.</text>
</comment>
<comment type="catalytic activity">
    <reaction evidence="1">
        <text>(2S,3R)-3-hydroxybutane-1,2,3-tricarboxylate = pyruvate + succinate</text>
        <dbReference type="Rhea" id="RHEA:16809"/>
        <dbReference type="ChEBI" id="CHEBI:15361"/>
        <dbReference type="ChEBI" id="CHEBI:30031"/>
        <dbReference type="ChEBI" id="CHEBI:57429"/>
        <dbReference type="EC" id="4.1.3.30"/>
    </reaction>
</comment>
<comment type="cofactor">
    <cofactor evidence="1">
        <name>Mg(2+)</name>
        <dbReference type="ChEBI" id="CHEBI:18420"/>
    </cofactor>
</comment>
<comment type="subunit">
    <text evidence="1">Homotetramer; dimer of dimers.</text>
</comment>
<comment type="miscellaneous">
    <text evidence="2">The prpD1B1C1 operon seems not to be involved in propionate degradation.</text>
</comment>
<comment type="similarity">
    <text evidence="1">Belongs to the isocitrate lyase/PEP mutase superfamily. Methylisocitrate lyase family.</text>
</comment>
<comment type="sequence caution" evidence="4">
    <conflict type="erroneous initiation">
        <sequence resource="EMBL-CDS" id="BAB98088"/>
    </conflict>
    <text>Truncated N-terminus.</text>
</comment>
<gene>
    <name evidence="1" type="primary">prpB1</name>
    <name type="ordered locus">Cgl0695</name>
    <name type="ordered locus">cg0797</name>
</gene>
<name>PRPB1_CORGL</name>